<name>AT11B_MOUSE</name>
<proteinExistence type="evidence at protein level"/>
<sequence>MWRWVRQQLGFDPPHQSDTRTIYIANRFPQNGLYTPQKFIDNRIISSKYTIWNFVPKNLFEQFRRVANFYFLIIFLVQLMIDTPTSPITSGLPLFFVITVTAIKQGYEDWLRHNSDNEVNGAPVYVVRSGGLVKTRSKNIRVGDIVRIAKDEIFPADLVLLSSDRLDGSCHVTTASLDGETNLKTHVSVPETAVLQTVANLDSLIAVIECQQPEADLYRFMGRMIITQQMEEIVRPLGPESLLLRGARLKNTKEIFGVAVYTGMETKMALNYKSKSQKRSAVEKSMNTFLIIYLIILISEAIISTILKYTWQAEEKWDEPWYNQKTEHQRNSSKILRFISDFLAFLVLYNFIIPISLYVTVEMQKFLGSFFIGWDLDLYHEESDQKAQVNTSDLNEELGQVEYVFTDKTGTLTENEMQFRECSINGLKYQEINGKLVPEGPSPDSTEGEVPFLGSLSHLSNSAHLTATSLRTSPESETELIKEHDLFFKAVSLCHTVQISNVQTDGIGDGPWQPNLAPAQLEYYASSPDEKALVEAAARAGIIFVGISEETMEVKVLGRLERYKLLHILEFDSDRRRMSVIVQAPSGEKLLFAKGAESSILPKCIGGEIAKTRIHVDEFALKGLRTLCIAYRQFTAKEYEDVDRRLFEARTALQHREEKLADAFQYIEKDLILLGATAVEDRLQDKVRETIEALRMAGIKVWVLTGDKHETAVSVSLSCGHFHRTMNILELINQKSDSGCAEQLRQLARRITEDHVIQHGLVVDGTSLSLALREHEKLFMEVCRNCSAVLCCRMAPLQKAKVIRLIKISPEKPITLAVGDGANDVSMIQEAHVGIGIMGKEGRQAARNSDYAIARFKFLSKLLFVHGHFYYIRIATLVQYFFYKNVCFITPQFLYQFYCLFSQQTLYDSVYLTLYNICFTSLPVLIYSLVEQHIDPHVLQSKPTLYRDISKNGLLSIKAFLYWTVLGFSHAFIFFFGSYFLVGKDTSLLGNGQMFGNWTFGTLVFTVMVITVTVKMALETHFWTWINHLVTWGSIIFYFIFSLFYGGILWPFLGSQNMYFVFIQLLSSGSAWFAILLMVVTCLFIDVVKKVFDRQLHPTSTEKAQLAEAHSSVKCLDSVCCFPGETPCASVGRMLERVIGRCSPNHISRLWNASDPFYTNDRSILTLSPMDSSTC</sequence>
<comment type="function">
    <text evidence="3">Catalytic component of a P4-ATPase flippase complex which catalyzes the hydrolysis of ATP coupled to the transport of aminophospholipids, phosphatidylserines (PS) and phosphatidylethanolamines (PE), from the outer to the inner leaflet of intracellular membranes. May contribute to the maintenance of membrane lipid asymmetry in endosome compartment.</text>
</comment>
<comment type="catalytic activity">
    <reaction evidence="3">
        <text>ATP + H2O + phospholipidSide 1 = ADP + phosphate + phospholipidSide 2.</text>
        <dbReference type="EC" id="7.6.2.1"/>
    </reaction>
</comment>
<comment type="catalytic activity">
    <reaction evidence="3">
        <text>a 1,2-diacyl-sn-glycero-3-phospho-L-serine(out) + ATP + H2O = a 1,2-diacyl-sn-glycero-3-phospho-L-serine(in) + ADP + phosphate + H(+)</text>
        <dbReference type="Rhea" id="RHEA:38567"/>
        <dbReference type="ChEBI" id="CHEBI:15377"/>
        <dbReference type="ChEBI" id="CHEBI:15378"/>
        <dbReference type="ChEBI" id="CHEBI:30616"/>
        <dbReference type="ChEBI" id="CHEBI:43474"/>
        <dbReference type="ChEBI" id="CHEBI:57262"/>
        <dbReference type="ChEBI" id="CHEBI:456216"/>
    </reaction>
    <physiologicalReaction direction="left-to-right" evidence="3">
        <dbReference type="Rhea" id="RHEA:38568"/>
    </physiologicalReaction>
</comment>
<comment type="catalytic activity">
    <reaction evidence="3">
        <text>a 1,2-diacyl-sn-glycero-3-phosphoethanolamine(out) + ATP + H2O = a 1,2-diacyl-sn-glycero-3-phosphoethanolamine(in) + ADP + phosphate + H(+)</text>
        <dbReference type="Rhea" id="RHEA:66132"/>
        <dbReference type="ChEBI" id="CHEBI:15377"/>
        <dbReference type="ChEBI" id="CHEBI:15378"/>
        <dbReference type="ChEBI" id="CHEBI:30616"/>
        <dbReference type="ChEBI" id="CHEBI:43474"/>
        <dbReference type="ChEBI" id="CHEBI:64612"/>
        <dbReference type="ChEBI" id="CHEBI:456216"/>
    </reaction>
    <physiologicalReaction direction="left-to-right" evidence="3">
        <dbReference type="Rhea" id="RHEA:66133"/>
    </physiologicalReaction>
</comment>
<comment type="cofactor">
    <cofactor evidence="4">
        <name>Mg(2+)</name>
        <dbReference type="ChEBI" id="CHEBI:18420"/>
    </cofactor>
</comment>
<comment type="subunit">
    <text evidence="6">Component of a P4-ATPase flippase complex which consists of a catalytic alpha subunit ATP11B and an accessory beta subunit TMEM30A.</text>
</comment>
<comment type="subcellular location">
    <subcellularLocation>
        <location evidence="3">Recycling endosome membrane</location>
        <topology evidence="3">Multi-pass membrane protein</topology>
    </subcellularLocation>
    <subcellularLocation>
        <location evidence="3">Early endosome</location>
    </subcellularLocation>
    <subcellularLocation>
        <location evidence="3">Endoplasmic reticulum</location>
    </subcellularLocation>
    <subcellularLocation>
        <location evidence="3">Golgi apparatus</location>
        <location evidence="3">trans-Golgi network</location>
    </subcellularLocation>
    <text evidence="3">Exit from the endoplasmic reticulum requires the presence of TMEM30A, but not TMEM30B. In the presence of TMEM30A, mainly located in recycling endosomes.</text>
</comment>
<comment type="tissue specificity">
    <text evidence="6">Expressed in retina, brain, liver, testes and kidney (at protein level).</text>
</comment>
<comment type="similarity">
    <text evidence="8">Belongs to the cation transport ATPase (P-type) (TC 3.A.3) family. Type IV subfamily.</text>
</comment>
<organism>
    <name type="scientific">Mus musculus</name>
    <name type="common">Mouse</name>
    <dbReference type="NCBI Taxonomy" id="10090"/>
    <lineage>
        <taxon>Eukaryota</taxon>
        <taxon>Metazoa</taxon>
        <taxon>Chordata</taxon>
        <taxon>Craniata</taxon>
        <taxon>Vertebrata</taxon>
        <taxon>Euteleostomi</taxon>
        <taxon>Mammalia</taxon>
        <taxon>Eutheria</taxon>
        <taxon>Euarchontoglires</taxon>
        <taxon>Glires</taxon>
        <taxon>Rodentia</taxon>
        <taxon>Myomorpha</taxon>
        <taxon>Muroidea</taxon>
        <taxon>Muridae</taxon>
        <taxon>Murinae</taxon>
        <taxon>Mus</taxon>
        <taxon>Mus</taxon>
    </lineage>
</organism>
<evidence type="ECO:0000250" key="1">
    <source>
        <dbReference type="UniProtKB" id="P04191"/>
    </source>
</evidence>
<evidence type="ECO:0000250" key="2">
    <source>
        <dbReference type="UniProtKB" id="Q9HD20"/>
    </source>
</evidence>
<evidence type="ECO:0000250" key="3">
    <source>
        <dbReference type="UniProtKB" id="Q9Y2G3"/>
    </source>
</evidence>
<evidence type="ECO:0000250" key="4">
    <source>
        <dbReference type="UniProtKB" id="Q9Y2Q0"/>
    </source>
</evidence>
<evidence type="ECO:0000255" key="5"/>
<evidence type="ECO:0000269" key="6">
    <source>
    </source>
</evidence>
<evidence type="ECO:0000303" key="7">
    <source>
    </source>
</evidence>
<evidence type="ECO:0000305" key="8"/>
<evidence type="ECO:0000312" key="9">
    <source>
        <dbReference type="MGI" id="MGI:1923545"/>
    </source>
</evidence>
<gene>
    <name evidence="7 9" type="primary">Atp11b</name>
</gene>
<reference key="1">
    <citation type="submission" date="2005-07" db="EMBL/GenBank/DDBJ databases">
        <authorList>
            <person name="Birren B."/>
            <person name="Nusbaum C."/>
            <person name="Lander E."/>
            <person name="Abouelleil A."/>
            <person name="Allen N."/>
            <person name="Anderson M."/>
            <person name="Anderson S."/>
            <person name="Arachchi H.M."/>
            <person name="Barna N."/>
            <person name="Bastien V."/>
            <person name="Bloom T."/>
            <person name="Boguslavkiy L."/>
            <person name="Boukhgalter B."/>
            <person name="Camarata J."/>
            <person name="Chang J."/>
            <person name="Choepel Y."/>
            <person name="Collymore A."/>
            <person name="Cook A."/>
            <person name="Cooke P."/>
            <person name="Corum B."/>
            <person name="DeArellano K."/>
            <person name="Diaz J.S."/>
            <person name="Dodge S."/>
            <person name="Dooley K."/>
            <person name="Dorris L."/>
            <person name="Erickson J."/>
            <person name="Faro S."/>
            <person name="Ferreira P."/>
            <person name="FitzGerald M."/>
            <person name="Gage D."/>
            <person name="Galagan J."/>
            <person name="Gardyna S."/>
            <person name="Graham L."/>
            <person name="Grand-Pierre N."/>
            <person name="Hafez N."/>
            <person name="Hagopian D."/>
            <person name="Hagos B."/>
            <person name="Hall J."/>
            <person name="Horton L."/>
            <person name="Hulme W."/>
            <person name="Iliev I."/>
            <person name="Johnson R."/>
            <person name="Jones C."/>
            <person name="Kamat A."/>
            <person name="Karatas A."/>
            <person name="Kells C."/>
            <person name="Landers T."/>
            <person name="Levine R."/>
            <person name="Lindblad-Toh K."/>
            <person name="Liu G."/>
            <person name="Liu X."/>
            <person name="Lui A."/>
            <person name="Mabbitt R."/>
            <person name="MacLean C."/>
            <person name="Macdonald P."/>
            <person name="Major J."/>
            <person name="Manning J."/>
            <person name="Matthews C."/>
            <person name="McCarthy M."/>
            <person name="Meldrim J."/>
            <person name="Meneus L."/>
            <person name="Mihova T."/>
            <person name="Mlenga V."/>
            <person name="Murphy T."/>
            <person name="Naylor J."/>
            <person name="Nguyen C."/>
            <person name="Nguyen T."/>
            <person name="Nicol R."/>
            <person name="Norbu C."/>
            <person name="O'Connor T."/>
            <person name="O'Donnell P."/>
            <person name="O'Neil D."/>
            <person name="Oliver J."/>
            <person name="Peterson K."/>
            <person name="Phunkhang P."/>
            <person name="Pierre N."/>
            <person name="Rachupka A."/>
            <person name="Ramasamy U."/>
            <person name="Raymond C."/>
            <person name="Retta R."/>
            <person name="Rise C."/>
            <person name="Rogov P."/>
            <person name="Roman J."/>
            <person name="Schauer S."/>
            <person name="Schupback R."/>
            <person name="Seaman S."/>
            <person name="Severy P."/>
            <person name="Smith C."/>
            <person name="Spencer B."/>
            <person name="Stange-Thomann N."/>
            <person name="Stojanovic N."/>
            <person name="Stubbs M."/>
            <person name="Talamas J."/>
            <person name="Tesfaye S."/>
            <person name="Theodore J."/>
            <person name="Topham K."/>
            <person name="Travers M."/>
            <person name="Vassiliev H."/>
            <person name="Venkataraman V.S."/>
            <person name="Viel R."/>
            <person name="Vo A."/>
            <person name="Wilson B."/>
            <person name="Wu X."/>
            <person name="Wyman D."/>
            <person name="Young G."/>
            <person name="Zainoun J."/>
            <person name="Zembek L."/>
            <person name="Zimmer A."/>
            <person name="Zody M."/>
        </authorList>
    </citation>
    <scope>NUCLEOTIDE SEQUENCE [GENOMIC DNA]</scope>
</reference>
<reference key="2">
    <citation type="journal article" date="2004" name="Genome Res.">
        <title>The status, quality, and expansion of the NIH full-length cDNA project: the Mammalian Gene Collection (MGC).</title>
        <authorList>
            <consortium name="The MGC Project Team"/>
        </authorList>
    </citation>
    <scope>NUCLEOTIDE SEQUENCE [LARGE SCALE MRNA]</scope>
    <source>
        <tissue>Brain</tissue>
    </source>
</reference>
<reference key="3">
    <citation type="journal article" date="2010" name="Cell">
        <title>A tissue-specific atlas of mouse protein phosphorylation and expression.</title>
        <authorList>
            <person name="Huttlin E.L."/>
            <person name="Jedrychowski M.P."/>
            <person name="Elias J.E."/>
            <person name="Goswami T."/>
            <person name="Rad R."/>
            <person name="Beausoleil S.A."/>
            <person name="Villen J."/>
            <person name="Haas W."/>
            <person name="Sowa M.E."/>
            <person name="Gygi S.P."/>
        </authorList>
    </citation>
    <scope>IDENTIFICATION BY MASS SPECTROMETRY [LARGE SCALE ANALYSIS]</scope>
</reference>
<reference key="4">
    <citation type="journal article" date="2018" name="Sci. Rep.">
        <title>Proteomic Analysis and Functional Characterization of P4-ATPase Phospholipid Flippases from Murine Tissues.</title>
        <authorList>
            <person name="Wang J."/>
            <person name="Molday L.L."/>
            <person name="Hii T."/>
            <person name="Coleman J.A."/>
            <person name="Wen T."/>
            <person name="Andersen J.P."/>
            <person name="Molday R.S."/>
        </authorList>
    </citation>
    <scope>IDENTIFICATION BY MASS SPECTROMETRY</scope>
    <scope>INTERACTION WITH TMEM30A</scope>
    <scope>SUBUNIT</scope>
    <scope>TISSUE SPECIFICITY</scope>
</reference>
<accession>Q6DFW5</accession>
<protein>
    <recommendedName>
        <fullName>Phospholipid-transporting ATPase IF</fullName>
        <ecNumber evidence="3">7.6.2.1</ecNumber>
    </recommendedName>
    <alternativeName>
        <fullName>ATPase class VI type 11B</fullName>
    </alternativeName>
    <alternativeName>
        <fullName>P4-ATPase flippase complex alpha subunit ATP11B</fullName>
    </alternativeName>
</protein>
<dbReference type="EC" id="7.6.2.1" evidence="3"/>
<dbReference type="EMBL" id="AC157780">
    <property type="status" value="NOT_ANNOTATED_CDS"/>
    <property type="molecule type" value="Genomic_DNA"/>
</dbReference>
<dbReference type="EMBL" id="BC076603">
    <property type="protein sequence ID" value="AAH76603.1"/>
    <property type="molecule type" value="mRNA"/>
</dbReference>
<dbReference type="CCDS" id="CCDS38414.1"/>
<dbReference type="RefSeq" id="NP_083846.2">
    <property type="nucleotide sequence ID" value="NM_029570.3"/>
</dbReference>
<dbReference type="SMR" id="Q6DFW5"/>
<dbReference type="FunCoup" id="Q6DFW5">
    <property type="interactions" value="1295"/>
</dbReference>
<dbReference type="STRING" id="10090.ENSMUSP00000029257"/>
<dbReference type="iPTMnet" id="Q6DFW5"/>
<dbReference type="PhosphoSitePlus" id="Q6DFW5"/>
<dbReference type="jPOST" id="Q6DFW5"/>
<dbReference type="PaxDb" id="10090-ENSMUSP00000029257"/>
<dbReference type="PeptideAtlas" id="Q6DFW5"/>
<dbReference type="ProteomicsDB" id="328776"/>
<dbReference type="Antibodypedia" id="33765">
    <property type="antibodies" value="133 antibodies from 30 providers"/>
</dbReference>
<dbReference type="DNASU" id="76295"/>
<dbReference type="Ensembl" id="ENSMUST00000029257.15">
    <property type="protein sequence ID" value="ENSMUSP00000029257.9"/>
    <property type="gene ID" value="ENSMUSG00000037400.18"/>
</dbReference>
<dbReference type="GeneID" id="76295"/>
<dbReference type="KEGG" id="mmu:76295"/>
<dbReference type="UCSC" id="uc008oyt.1">
    <property type="organism name" value="mouse"/>
</dbReference>
<dbReference type="AGR" id="MGI:1923545"/>
<dbReference type="CTD" id="23200"/>
<dbReference type="MGI" id="MGI:1923545">
    <property type="gene designation" value="Atp11b"/>
</dbReference>
<dbReference type="VEuPathDB" id="HostDB:ENSMUSG00000037400"/>
<dbReference type="eggNOG" id="KOG0206">
    <property type="taxonomic scope" value="Eukaryota"/>
</dbReference>
<dbReference type="GeneTree" id="ENSGT00940000156162"/>
<dbReference type="HOGENOM" id="CLU_000846_3_1_1"/>
<dbReference type="InParanoid" id="Q6DFW5"/>
<dbReference type="OMA" id="QMYGNDK"/>
<dbReference type="OrthoDB" id="377733at2759"/>
<dbReference type="PhylomeDB" id="Q6DFW5"/>
<dbReference type="TreeFam" id="TF326897"/>
<dbReference type="BRENDA" id="7.6.2.1">
    <property type="organism ID" value="3474"/>
</dbReference>
<dbReference type="Reactome" id="R-MMU-6798695">
    <property type="pathway name" value="Neutrophil degranulation"/>
</dbReference>
<dbReference type="Reactome" id="R-MMU-936837">
    <property type="pathway name" value="Ion transport by P-type ATPases"/>
</dbReference>
<dbReference type="BioGRID-ORCS" id="76295">
    <property type="hits" value="2 hits in 77 CRISPR screens"/>
</dbReference>
<dbReference type="ChiTaRS" id="Atp11b">
    <property type="organism name" value="mouse"/>
</dbReference>
<dbReference type="PRO" id="PR:Q6DFW5"/>
<dbReference type="Proteomes" id="UP000000589">
    <property type="component" value="Chromosome 3"/>
</dbReference>
<dbReference type="RNAct" id="Q6DFW5">
    <property type="molecule type" value="protein"/>
</dbReference>
<dbReference type="Bgee" id="ENSMUSG00000037400">
    <property type="expression patterns" value="Expressed in retinal neural layer and 245 other cell types or tissues"/>
</dbReference>
<dbReference type="ExpressionAtlas" id="Q6DFW5">
    <property type="expression patterns" value="baseline and differential"/>
</dbReference>
<dbReference type="GO" id="GO:0031901">
    <property type="term" value="C:early endosome membrane"/>
    <property type="evidence" value="ECO:0007669"/>
    <property type="project" value="Ensembl"/>
</dbReference>
<dbReference type="GO" id="GO:0005783">
    <property type="term" value="C:endoplasmic reticulum"/>
    <property type="evidence" value="ECO:0007669"/>
    <property type="project" value="UniProtKB-SubCell"/>
</dbReference>
<dbReference type="GO" id="GO:0005794">
    <property type="term" value="C:Golgi apparatus"/>
    <property type="evidence" value="ECO:0007669"/>
    <property type="project" value="UniProtKB-SubCell"/>
</dbReference>
<dbReference type="GO" id="GO:1990531">
    <property type="term" value="C:phospholipid-translocating ATPase complex"/>
    <property type="evidence" value="ECO:0007669"/>
    <property type="project" value="Ensembl"/>
</dbReference>
<dbReference type="GO" id="GO:0055038">
    <property type="term" value="C:recycling endosome membrane"/>
    <property type="evidence" value="ECO:0007669"/>
    <property type="project" value="UniProtKB-SubCell"/>
</dbReference>
<dbReference type="GO" id="GO:0005524">
    <property type="term" value="F:ATP binding"/>
    <property type="evidence" value="ECO:0007669"/>
    <property type="project" value="UniProtKB-KW"/>
</dbReference>
<dbReference type="GO" id="GO:0016887">
    <property type="term" value="F:ATP hydrolysis activity"/>
    <property type="evidence" value="ECO:0007669"/>
    <property type="project" value="InterPro"/>
</dbReference>
<dbReference type="GO" id="GO:0140326">
    <property type="term" value="F:ATPase-coupled intramembrane lipid transporter activity"/>
    <property type="evidence" value="ECO:0007669"/>
    <property type="project" value="UniProtKB-EC"/>
</dbReference>
<dbReference type="GO" id="GO:0000287">
    <property type="term" value="F:magnesium ion binding"/>
    <property type="evidence" value="ECO:0007669"/>
    <property type="project" value="InterPro"/>
</dbReference>
<dbReference type="GO" id="GO:0015914">
    <property type="term" value="P:phospholipid transport"/>
    <property type="evidence" value="ECO:0007669"/>
    <property type="project" value="InterPro"/>
</dbReference>
<dbReference type="CDD" id="cd02073">
    <property type="entry name" value="P-type_ATPase_APLT_Dnf-like"/>
    <property type="match status" value="1"/>
</dbReference>
<dbReference type="FunFam" id="2.70.150.10:FF:000013">
    <property type="entry name" value="Phospholipid-transporting ATPase"/>
    <property type="match status" value="1"/>
</dbReference>
<dbReference type="FunFam" id="3.40.1110.10:FF:000019">
    <property type="entry name" value="Phospholipid-transporting ATPase"/>
    <property type="match status" value="1"/>
</dbReference>
<dbReference type="FunFam" id="3.40.50.1000:FF:000034">
    <property type="entry name" value="Phospholipid-transporting ATPase"/>
    <property type="match status" value="1"/>
</dbReference>
<dbReference type="Gene3D" id="3.40.1110.10">
    <property type="entry name" value="Calcium-transporting ATPase, cytoplasmic domain N"/>
    <property type="match status" value="1"/>
</dbReference>
<dbReference type="Gene3D" id="2.70.150.10">
    <property type="entry name" value="Calcium-transporting ATPase, cytoplasmic transduction domain A"/>
    <property type="match status" value="1"/>
</dbReference>
<dbReference type="Gene3D" id="3.40.50.1000">
    <property type="entry name" value="HAD superfamily/HAD-like"/>
    <property type="match status" value="1"/>
</dbReference>
<dbReference type="InterPro" id="IPR023299">
    <property type="entry name" value="ATPase_P-typ_cyto_dom_N"/>
</dbReference>
<dbReference type="InterPro" id="IPR018303">
    <property type="entry name" value="ATPase_P-typ_P_site"/>
</dbReference>
<dbReference type="InterPro" id="IPR023298">
    <property type="entry name" value="ATPase_P-typ_TM_dom_sf"/>
</dbReference>
<dbReference type="InterPro" id="IPR008250">
    <property type="entry name" value="ATPase_P-typ_transduc_dom_A_sf"/>
</dbReference>
<dbReference type="InterPro" id="IPR036412">
    <property type="entry name" value="HAD-like_sf"/>
</dbReference>
<dbReference type="InterPro" id="IPR023214">
    <property type="entry name" value="HAD_sf"/>
</dbReference>
<dbReference type="InterPro" id="IPR006539">
    <property type="entry name" value="P-type_ATPase_IV"/>
</dbReference>
<dbReference type="InterPro" id="IPR032631">
    <property type="entry name" value="P-type_ATPase_N"/>
</dbReference>
<dbReference type="InterPro" id="IPR001757">
    <property type="entry name" value="P_typ_ATPase"/>
</dbReference>
<dbReference type="InterPro" id="IPR032630">
    <property type="entry name" value="P_typ_ATPase_c"/>
</dbReference>
<dbReference type="InterPro" id="IPR044492">
    <property type="entry name" value="P_typ_ATPase_HD_dom"/>
</dbReference>
<dbReference type="NCBIfam" id="TIGR01652">
    <property type="entry name" value="ATPase-Plipid"/>
    <property type="match status" value="1"/>
</dbReference>
<dbReference type="NCBIfam" id="TIGR01494">
    <property type="entry name" value="ATPase_P-type"/>
    <property type="match status" value="3"/>
</dbReference>
<dbReference type="PANTHER" id="PTHR24092:SF57">
    <property type="entry name" value="PHOSPHOLIPID-TRANSPORTING ATPASE IF"/>
    <property type="match status" value="1"/>
</dbReference>
<dbReference type="PANTHER" id="PTHR24092">
    <property type="entry name" value="PROBABLE PHOSPHOLIPID-TRANSPORTING ATPASE"/>
    <property type="match status" value="1"/>
</dbReference>
<dbReference type="Pfam" id="PF13246">
    <property type="entry name" value="Cation_ATPase"/>
    <property type="match status" value="1"/>
</dbReference>
<dbReference type="Pfam" id="PF00122">
    <property type="entry name" value="E1-E2_ATPase"/>
    <property type="match status" value="1"/>
</dbReference>
<dbReference type="Pfam" id="PF00702">
    <property type="entry name" value="Hydrolase"/>
    <property type="match status" value="1"/>
</dbReference>
<dbReference type="Pfam" id="PF16212">
    <property type="entry name" value="PhoLip_ATPase_C"/>
    <property type="match status" value="1"/>
</dbReference>
<dbReference type="Pfam" id="PF16209">
    <property type="entry name" value="PhoLip_ATPase_N"/>
    <property type="match status" value="1"/>
</dbReference>
<dbReference type="PRINTS" id="PR00119">
    <property type="entry name" value="CATATPASE"/>
</dbReference>
<dbReference type="SFLD" id="SFLDS00003">
    <property type="entry name" value="Haloacid_Dehalogenase"/>
    <property type="match status" value="1"/>
</dbReference>
<dbReference type="SFLD" id="SFLDF00027">
    <property type="entry name" value="p-type_atpase"/>
    <property type="match status" value="1"/>
</dbReference>
<dbReference type="SUPFAM" id="SSF81653">
    <property type="entry name" value="Calcium ATPase, transduction domain A"/>
    <property type="match status" value="1"/>
</dbReference>
<dbReference type="SUPFAM" id="SSF81665">
    <property type="entry name" value="Calcium ATPase, transmembrane domain M"/>
    <property type="match status" value="1"/>
</dbReference>
<dbReference type="SUPFAM" id="SSF56784">
    <property type="entry name" value="HAD-like"/>
    <property type="match status" value="1"/>
</dbReference>
<dbReference type="SUPFAM" id="SSF81660">
    <property type="entry name" value="Metal cation-transporting ATPase, ATP-binding domain N"/>
    <property type="match status" value="1"/>
</dbReference>
<dbReference type="PROSITE" id="PS00154">
    <property type="entry name" value="ATPASE_E1_E2"/>
    <property type="match status" value="1"/>
</dbReference>
<keyword id="KW-0067">ATP-binding</keyword>
<keyword id="KW-0256">Endoplasmic reticulum</keyword>
<keyword id="KW-0967">Endosome</keyword>
<keyword id="KW-0333">Golgi apparatus</keyword>
<keyword id="KW-0445">Lipid transport</keyword>
<keyword id="KW-0460">Magnesium</keyword>
<keyword id="KW-0472">Membrane</keyword>
<keyword id="KW-0479">Metal-binding</keyword>
<keyword id="KW-0547">Nucleotide-binding</keyword>
<keyword id="KW-1185">Reference proteome</keyword>
<keyword id="KW-1278">Translocase</keyword>
<keyword id="KW-0812">Transmembrane</keyword>
<keyword id="KW-1133">Transmembrane helix</keyword>
<keyword id="KW-0813">Transport</keyword>
<feature type="chain" id="PRO_0000452279" description="Phospholipid-transporting ATPase IF">
    <location>
        <begin position="1"/>
        <end position="1175"/>
    </location>
</feature>
<feature type="transmembrane region" description="Helical" evidence="5">
    <location>
        <begin position="69"/>
        <end position="89"/>
    </location>
</feature>
<feature type="transmembrane region" description="Helical" evidence="5">
    <location>
        <begin position="91"/>
        <end position="111"/>
    </location>
</feature>
<feature type="transmembrane region" description="Helical" evidence="5">
    <location>
        <begin position="287"/>
        <end position="307"/>
    </location>
</feature>
<feature type="transmembrane region" description="Helical" evidence="5">
    <location>
        <begin position="338"/>
        <end position="358"/>
    </location>
</feature>
<feature type="transmembrane region" description="Helical" evidence="5">
    <location>
        <begin position="862"/>
        <end position="882"/>
    </location>
</feature>
<feature type="transmembrane region" description="Helical" evidence="5">
    <location>
        <begin position="910"/>
        <end position="930"/>
    </location>
</feature>
<feature type="transmembrane region" description="Helical" evidence="5">
    <location>
        <begin position="963"/>
        <end position="983"/>
    </location>
</feature>
<feature type="transmembrane region" description="Helical" evidence="5">
    <location>
        <begin position="994"/>
        <end position="1014"/>
    </location>
</feature>
<feature type="transmembrane region" description="Helical" evidence="5">
    <location>
        <begin position="1033"/>
        <end position="1053"/>
    </location>
</feature>
<feature type="transmembrane region" description="Helical" evidence="5">
    <location>
        <begin position="1060"/>
        <end position="1080"/>
    </location>
</feature>
<feature type="active site" description="4-aspartylphosphate intermediate" evidence="2">
    <location>
        <position position="407"/>
    </location>
</feature>
<feature type="binding site" evidence="4">
    <location>
        <position position="407"/>
    </location>
    <ligand>
        <name>ATP</name>
        <dbReference type="ChEBI" id="CHEBI:30616"/>
    </ligand>
</feature>
<feature type="binding site" evidence="4">
    <location>
        <position position="407"/>
    </location>
    <ligand>
        <name>Mg(2+)</name>
        <dbReference type="ChEBI" id="CHEBI:18420"/>
    </ligand>
</feature>
<feature type="binding site" evidence="4">
    <location>
        <position position="408"/>
    </location>
    <ligand>
        <name>ATP</name>
        <dbReference type="ChEBI" id="CHEBI:30616"/>
    </ligand>
</feature>
<feature type="binding site" evidence="4">
    <location>
        <position position="409"/>
    </location>
    <ligand>
        <name>ATP</name>
        <dbReference type="ChEBI" id="CHEBI:30616"/>
    </ligand>
</feature>
<feature type="binding site" evidence="4">
    <location>
        <position position="409"/>
    </location>
    <ligand>
        <name>Mg(2+)</name>
        <dbReference type="ChEBI" id="CHEBI:18420"/>
    </ligand>
</feature>
<feature type="binding site" evidence="1">
    <location>
        <position position="530"/>
    </location>
    <ligand>
        <name>ATP</name>
        <dbReference type="ChEBI" id="CHEBI:30616"/>
    </ligand>
</feature>
<feature type="binding site" evidence="4">
    <location>
        <position position="571"/>
    </location>
    <ligand>
        <name>ATP</name>
        <dbReference type="ChEBI" id="CHEBI:30616"/>
    </ligand>
</feature>
<feature type="binding site" evidence="1">
    <location>
        <position position="594"/>
    </location>
    <ligand>
        <name>ATP</name>
        <dbReference type="ChEBI" id="CHEBI:30616"/>
    </ligand>
</feature>
<feature type="binding site" evidence="1">
    <location>
        <position position="625"/>
    </location>
    <ligand>
        <name>ATP</name>
        <dbReference type="ChEBI" id="CHEBI:30616"/>
    </ligand>
</feature>
<feature type="binding site" evidence="1">
    <location>
        <position position="705"/>
    </location>
    <ligand>
        <name>ATP</name>
        <dbReference type="ChEBI" id="CHEBI:30616"/>
    </ligand>
</feature>
<feature type="binding site" evidence="1">
    <location>
        <position position="706"/>
    </location>
    <ligand>
        <name>ATP</name>
        <dbReference type="ChEBI" id="CHEBI:30616"/>
    </ligand>
</feature>
<feature type="binding site" evidence="1">
    <location>
        <position position="707"/>
    </location>
    <ligand>
        <name>ATP</name>
        <dbReference type="ChEBI" id="CHEBI:30616"/>
    </ligand>
</feature>
<feature type="binding site" evidence="1">
    <location>
        <position position="793"/>
    </location>
    <ligand>
        <name>ATP</name>
        <dbReference type="ChEBI" id="CHEBI:30616"/>
    </ligand>
</feature>
<feature type="binding site" evidence="1">
    <location>
        <position position="799"/>
    </location>
    <ligand>
        <name>ATP</name>
        <dbReference type="ChEBI" id="CHEBI:30616"/>
    </ligand>
</feature>
<feature type="binding site" evidence="2">
    <location>
        <position position="820"/>
    </location>
    <ligand>
        <name>Mg(2+)</name>
        <dbReference type="ChEBI" id="CHEBI:18420"/>
    </ligand>
</feature>
<feature type="binding site" evidence="4">
    <location>
        <position position="823"/>
    </location>
    <ligand>
        <name>ATP</name>
        <dbReference type="ChEBI" id="CHEBI:30616"/>
    </ligand>
</feature>
<feature type="binding site" evidence="4">
    <location>
        <position position="824"/>
    </location>
    <ligand>
        <name>ATP</name>
        <dbReference type="ChEBI" id="CHEBI:30616"/>
    </ligand>
</feature>
<feature type="binding site" evidence="2">
    <location>
        <position position="824"/>
    </location>
    <ligand>
        <name>Mg(2+)</name>
        <dbReference type="ChEBI" id="CHEBI:18420"/>
    </ligand>
</feature>